<dbReference type="EC" id="2.4.2.60" evidence="1"/>
<dbReference type="EMBL" id="GG698912">
    <property type="protein sequence ID" value="EEU38990.1"/>
    <property type="molecule type" value="Genomic_DNA"/>
</dbReference>
<dbReference type="RefSeq" id="XP_003044703.1">
    <property type="nucleotide sequence ID" value="XM_003044657.1"/>
</dbReference>
<dbReference type="SMR" id="C7Z8P6"/>
<dbReference type="FunCoup" id="C7Z8P6">
    <property type="interactions" value="893"/>
</dbReference>
<dbReference type="STRING" id="660122.C7Z8P6"/>
<dbReference type="EnsemblFungi" id="NechaT61890">
    <property type="protein sequence ID" value="NechaP61890"/>
    <property type="gene ID" value="NechaG61890"/>
</dbReference>
<dbReference type="GeneID" id="9673613"/>
<dbReference type="KEGG" id="nhe:NECHADRAFT_61890"/>
<dbReference type="VEuPathDB" id="FungiDB:NECHADRAFT_61890"/>
<dbReference type="eggNOG" id="KOG2960">
    <property type="taxonomic scope" value="Eukaryota"/>
</dbReference>
<dbReference type="HOGENOM" id="CLU_053727_0_0_1"/>
<dbReference type="InParanoid" id="C7Z8P6"/>
<dbReference type="OMA" id="MFPRIVV"/>
<dbReference type="OrthoDB" id="410463at2759"/>
<dbReference type="Proteomes" id="UP000005206">
    <property type="component" value="Unassembled WGS sequence"/>
</dbReference>
<dbReference type="GO" id="GO:0005829">
    <property type="term" value="C:cytosol"/>
    <property type="evidence" value="ECO:0007669"/>
    <property type="project" value="UniProtKB-UniRule"/>
</dbReference>
<dbReference type="GO" id="GO:0005634">
    <property type="term" value="C:nucleus"/>
    <property type="evidence" value="ECO:0007669"/>
    <property type="project" value="UniProtKB-SubCell"/>
</dbReference>
<dbReference type="GO" id="GO:0160205">
    <property type="term" value="F:cysteine-dependent adenosine diphosphate thiazole synthase activity"/>
    <property type="evidence" value="ECO:0007669"/>
    <property type="project" value="UniProtKB-EC"/>
</dbReference>
<dbReference type="GO" id="GO:0008198">
    <property type="term" value="F:ferrous iron binding"/>
    <property type="evidence" value="ECO:0007669"/>
    <property type="project" value="EnsemblFungi"/>
</dbReference>
<dbReference type="GO" id="GO:0000002">
    <property type="term" value="P:mitochondrial genome maintenance"/>
    <property type="evidence" value="ECO:0007669"/>
    <property type="project" value="EnsemblFungi"/>
</dbReference>
<dbReference type="GO" id="GO:0009228">
    <property type="term" value="P:thiamine biosynthetic process"/>
    <property type="evidence" value="ECO:0007669"/>
    <property type="project" value="UniProtKB-UniRule"/>
</dbReference>
<dbReference type="GO" id="GO:0052837">
    <property type="term" value="P:thiazole biosynthetic process"/>
    <property type="evidence" value="ECO:0007669"/>
    <property type="project" value="UniProtKB-UniRule"/>
</dbReference>
<dbReference type="Gene3D" id="6.10.250.2840">
    <property type="match status" value="1"/>
</dbReference>
<dbReference type="Gene3D" id="3.50.50.60">
    <property type="entry name" value="FAD/NAD(P)-binding domain"/>
    <property type="match status" value="1"/>
</dbReference>
<dbReference type="HAMAP" id="MF_03158">
    <property type="entry name" value="THI4"/>
    <property type="match status" value="1"/>
</dbReference>
<dbReference type="InterPro" id="IPR036188">
    <property type="entry name" value="FAD/NAD-bd_sf"/>
</dbReference>
<dbReference type="InterPro" id="IPR027495">
    <property type="entry name" value="Sti35"/>
</dbReference>
<dbReference type="InterPro" id="IPR002922">
    <property type="entry name" value="Thi4_fam"/>
</dbReference>
<dbReference type="NCBIfam" id="TIGR00292">
    <property type="entry name" value="sulfide-dependent adenosine diphosphate thiazole synthase"/>
    <property type="match status" value="1"/>
</dbReference>
<dbReference type="PANTHER" id="PTHR43422">
    <property type="entry name" value="THIAMINE THIAZOLE SYNTHASE"/>
    <property type="match status" value="1"/>
</dbReference>
<dbReference type="PANTHER" id="PTHR43422:SF3">
    <property type="entry name" value="THIAMINE THIAZOLE SYNTHASE"/>
    <property type="match status" value="1"/>
</dbReference>
<dbReference type="Pfam" id="PF01946">
    <property type="entry name" value="Thi4"/>
    <property type="match status" value="1"/>
</dbReference>
<dbReference type="SUPFAM" id="SSF51905">
    <property type="entry name" value="FAD/NAD(P)-binding domain"/>
    <property type="match status" value="1"/>
</dbReference>
<accession>C7Z8P6</accession>
<protein>
    <recommendedName>
        <fullName evidence="1">Thiamine thiazole synthase</fullName>
        <ecNumber evidence="1">2.4.2.60</ecNumber>
    </recommendedName>
    <alternativeName>
        <fullName evidence="1">Thiazole biosynthetic enzyme</fullName>
    </alternativeName>
</protein>
<proteinExistence type="inferred from homology"/>
<name>THI4_FUSV7</name>
<keyword id="KW-0963">Cytoplasm</keyword>
<keyword id="KW-0408">Iron</keyword>
<keyword id="KW-0479">Metal-binding</keyword>
<keyword id="KW-0520">NAD</keyword>
<keyword id="KW-0539">Nucleus</keyword>
<keyword id="KW-1185">Reference proteome</keyword>
<keyword id="KW-0784">Thiamine biosynthesis</keyword>
<keyword id="KW-0808">Transferase</keyword>
<reference key="1">
    <citation type="journal article" date="2009" name="PLoS Genet.">
        <title>The genome of Nectria haematococca: contribution of supernumerary chromosomes to gene expansion.</title>
        <authorList>
            <person name="Coleman J.J."/>
            <person name="Rounsley S.D."/>
            <person name="Rodriguez-Carres M."/>
            <person name="Kuo A."/>
            <person name="Wasmann C.C."/>
            <person name="Grimwood J."/>
            <person name="Schmutz J."/>
            <person name="Taga M."/>
            <person name="White G.J."/>
            <person name="Zhou S."/>
            <person name="Schwartz D.C."/>
            <person name="Freitag M."/>
            <person name="Ma L.-J."/>
            <person name="Danchin E.G.J."/>
            <person name="Henrissat B."/>
            <person name="Coutinho P.M."/>
            <person name="Nelson D.R."/>
            <person name="Straney D."/>
            <person name="Napoli C.A."/>
            <person name="Barker B.M."/>
            <person name="Gribskov M."/>
            <person name="Rep M."/>
            <person name="Kroken S."/>
            <person name="Molnar I."/>
            <person name="Rensing C."/>
            <person name="Kennell J.C."/>
            <person name="Zamora J."/>
            <person name="Farman M.L."/>
            <person name="Selker E.U."/>
            <person name="Salamov A."/>
            <person name="Shapiro H."/>
            <person name="Pangilinan J."/>
            <person name="Lindquist E."/>
            <person name="Lamers C."/>
            <person name="Grigoriev I.V."/>
            <person name="Geiser D.M."/>
            <person name="Covert S.F."/>
            <person name="Temporini E."/>
            <person name="VanEtten H.D."/>
        </authorList>
    </citation>
    <scope>NUCLEOTIDE SEQUENCE [LARGE SCALE GENOMIC DNA]</scope>
    <source>
        <strain>ATCC MYA-4622 / CBS 123669 / FGSC 9596 / NRRL 45880 / 77-13-4</strain>
    </source>
</reference>
<evidence type="ECO:0000255" key="1">
    <source>
        <dbReference type="HAMAP-Rule" id="MF_03158"/>
    </source>
</evidence>
<feature type="chain" id="PRO_0000415875" description="Thiamine thiazole synthase">
    <location>
        <begin position="1"/>
        <end position="322"/>
    </location>
</feature>
<feature type="binding site" evidence="1">
    <location>
        <position position="84"/>
    </location>
    <ligand>
        <name>substrate</name>
    </ligand>
</feature>
<feature type="binding site" evidence="1">
    <location>
        <begin position="105"/>
        <end position="106"/>
    </location>
    <ligand>
        <name>substrate</name>
    </ligand>
</feature>
<feature type="binding site" evidence="1">
    <location>
        <position position="113"/>
    </location>
    <ligand>
        <name>substrate</name>
    </ligand>
</feature>
<feature type="binding site" evidence="1">
    <location>
        <position position="178"/>
    </location>
    <ligand>
        <name>substrate</name>
    </ligand>
</feature>
<feature type="binding site" evidence="1">
    <location>
        <position position="213"/>
    </location>
    <ligand>
        <name>substrate</name>
    </ligand>
</feature>
<feature type="binding site" evidence="1">
    <location>
        <position position="228"/>
    </location>
    <ligand>
        <name>substrate</name>
    </ligand>
</feature>
<feature type="binding site" evidence="1">
    <location>
        <position position="280"/>
    </location>
    <ligand>
        <name>substrate</name>
    </ligand>
</feature>
<feature type="binding site" evidence="1">
    <location>
        <begin position="290"/>
        <end position="292"/>
    </location>
    <ligand>
        <name>substrate</name>
    </ligand>
</feature>
<feature type="modified residue" description="2,3-didehydroalanine (Cys)" evidence="1">
    <location>
        <position position="211"/>
    </location>
</feature>
<organism>
    <name type="scientific">Fusarium vanettenii (strain ATCC MYA-4622 / CBS 123669 / FGSC 9596 / NRRL 45880 / 77-13-4)</name>
    <name type="common">Fusarium solani subsp. pisi</name>
    <dbReference type="NCBI Taxonomy" id="660122"/>
    <lineage>
        <taxon>Eukaryota</taxon>
        <taxon>Fungi</taxon>
        <taxon>Dikarya</taxon>
        <taxon>Ascomycota</taxon>
        <taxon>Pezizomycotina</taxon>
        <taxon>Sordariomycetes</taxon>
        <taxon>Hypocreomycetidae</taxon>
        <taxon>Hypocreales</taxon>
        <taxon>Nectriaceae</taxon>
        <taxon>Fusarium</taxon>
        <taxon>Fusarium solani species complex</taxon>
        <taxon>Fusarium vanettenii</taxon>
    </lineage>
</organism>
<sequence>MSPPAAVSPTTRSVELAAPAVKLPVGLSKNNTTATIEEMEGKWDDFKFAPIRESQVSRAMTRRYFQDLDNYAESDIVIIGAGSCGLSAAYILGKKRPDLRIAIIEASVSPGGGAWLGGQLFSAMVMRKPADAFLREVGVPYEDEGNYVVVKHAALFTSTIMSKVLQLPNIKLFNATCVEDLITRPSEEGVRISGVVTNWTLVSMHHDDQSCMDPNTINAPLVISTTGHDGPMGAFSVKRLVSMQRIEKLGGMRGLDMNVAEDAIVKGTREIVPGLIVGGMELSEVDGANRMGPTFGAMALSGLKAAEEALKIFDIRKKQNAF</sequence>
<gene>
    <name type="ORF">NECHADRAFT_61890</name>
</gene>
<comment type="function">
    <text evidence="1">Involved in biosynthesis of the thiamine precursor thiazole. Catalyzes the conversion of NAD and glycine to adenosine diphosphate 5-(2-hydroxyethyl)-4-methylthiazole-2-carboxylic acid (ADT), an adenylated thiazole intermediate. The reaction includes an iron-dependent sulfide transfer from a conserved cysteine residue of the protein to a thiazole intermediate. The enzyme can only undergo a single turnover, which suggests it is a suicide enzyme. May have additional roles in adaptation to various stress conditions and in DNA damage tolerance.</text>
</comment>
<comment type="catalytic activity">
    <reaction evidence="1">
        <text>[ADP-thiazole synthase]-L-cysteine + glycine + NAD(+) = [ADP-thiazole synthase]-dehydroalanine + ADP-5-ethyl-4-methylthiazole-2-carboxylate + nicotinamide + 3 H2O + 2 H(+)</text>
        <dbReference type="Rhea" id="RHEA:55708"/>
        <dbReference type="Rhea" id="RHEA-COMP:14264"/>
        <dbReference type="Rhea" id="RHEA-COMP:14265"/>
        <dbReference type="ChEBI" id="CHEBI:15377"/>
        <dbReference type="ChEBI" id="CHEBI:15378"/>
        <dbReference type="ChEBI" id="CHEBI:17154"/>
        <dbReference type="ChEBI" id="CHEBI:29950"/>
        <dbReference type="ChEBI" id="CHEBI:57305"/>
        <dbReference type="ChEBI" id="CHEBI:57540"/>
        <dbReference type="ChEBI" id="CHEBI:90873"/>
        <dbReference type="ChEBI" id="CHEBI:139151"/>
        <dbReference type="EC" id="2.4.2.60"/>
    </reaction>
</comment>
<comment type="cofactor">
    <cofactor evidence="1">
        <name>Fe cation</name>
        <dbReference type="ChEBI" id="CHEBI:24875"/>
    </cofactor>
    <text evidence="1">Binds 1 Fe cation per subunit.</text>
</comment>
<comment type="subunit">
    <text evidence="1">Homooctamer.</text>
</comment>
<comment type="subcellular location">
    <subcellularLocation>
        <location evidence="1">Cytoplasm</location>
    </subcellularLocation>
    <subcellularLocation>
        <location evidence="1">Nucleus</location>
    </subcellularLocation>
</comment>
<comment type="PTM">
    <text evidence="1">During the catalytic reaction, a sulfide is transferred from Cys-211 to a reaction intermediate, generating a dehydroalanine residue.</text>
</comment>
<comment type="similarity">
    <text evidence="1">Belongs to the THI4 family.</text>
</comment>